<dbReference type="EC" id="2.8.1.8" evidence="1"/>
<dbReference type="EMBL" id="CP000481">
    <property type="protein sequence ID" value="ABK52699.1"/>
    <property type="molecule type" value="Genomic_DNA"/>
</dbReference>
<dbReference type="RefSeq" id="WP_011719762.1">
    <property type="nucleotide sequence ID" value="NC_008578.1"/>
</dbReference>
<dbReference type="SMR" id="A0LTD9"/>
<dbReference type="FunCoup" id="A0LTD9">
    <property type="interactions" value="375"/>
</dbReference>
<dbReference type="STRING" id="351607.Acel_0926"/>
<dbReference type="KEGG" id="ace:Acel_0926"/>
<dbReference type="eggNOG" id="COG0320">
    <property type="taxonomic scope" value="Bacteria"/>
</dbReference>
<dbReference type="HOGENOM" id="CLU_033144_2_1_11"/>
<dbReference type="InParanoid" id="A0LTD9"/>
<dbReference type="OrthoDB" id="9787898at2"/>
<dbReference type="UniPathway" id="UPA00538">
    <property type="reaction ID" value="UER00593"/>
</dbReference>
<dbReference type="Proteomes" id="UP000008221">
    <property type="component" value="Chromosome"/>
</dbReference>
<dbReference type="GO" id="GO:0005737">
    <property type="term" value="C:cytoplasm"/>
    <property type="evidence" value="ECO:0007669"/>
    <property type="project" value="UniProtKB-SubCell"/>
</dbReference>
<dbReference type="GO" id="GO:0051539">
    <property type="term" value="F:4 iron, 4 sulfur cluster binding"/>
    <property type="evidence" value="ECO:0007669"/>
    <property type="project" value="UniProtKB-UniRule"/>
</dbReference>
<dbReference type="GO" id="GO:0016992">
    <property type="term" value="F:lipoate synthase activity"/>
    <property type="evidence" value="ECO:0007669"/>
    <property type="project" value="UniProtKB-UniRule"/>
</dbReference>
<dbReference type="GO" id="GO:0046872">
    <property type="term" value="F:metal ion binding"/>
    <property type="evidence" value="ECO:0007669"/>
    <property type="project" value="UniProtKB-KW"/>
</dbReference>
<dbReference type="CDD" id="cd01335">
    <property type="entry name" value="Radical_SAM"/>
    <property type="match status" value="1"/>
</dbReference>
<dbReference type="Gene3D" id="3.20.20.70">
    <property type="entry name" value="Aldolase class I"/>
    <property type="match status" value="1"/>
</dbReference>
<dbReference type="HAMAP" id="MF_00206">
    <property type="entry name" value="Lipoyl_synth"/>
    <property type="match status" value="1"/>
</dbReference>
<dbReference type="InterPro" id="IPR013785">
    <property type="entry name" value="Aldolase_TIM"/>
</dbReference>
<dbReference type="InterPro" id="IPR006638">
    <property type="entry name" value="Elp3/MiaA/NifB-like_rSAM"/>
</dbReference>
<dbReference type="InterPro" id="IPR031691">
    <property type="entry name" value="LIAS_N"/>
</dbReference>
<dbReference type="InterPro" id="IPR003698">
    <property type="entry name" value="Lipoyl_synth"/>
</dbReference>
<dbReference type="InterPro" id="IPR007197">
    <property type="entry name" value="rSAM"/>
</dbReference>
<dbReference type="NCBIfam" id="TIGR00510">
    <property type="entry name" value="lipA"/>
    <property type="match status" value="1"/>
</dbReference>
<dbReference type="NCBIfam" id="NF004019">
    <property type="entry name" value="PRK05481.1"/>
    <property type="match status" value="1"/>
</dbReference>
<dbReference type="NCBIfam" id="NF009544">
    <property type="entry name" value="PRK12928.1"/>
    <property type="match status" value="1"/>
</dbReference>
<dbReference type="PANTHER" id="PTHR10949">
    <property type="entry name" value="LIPOYL SYNTHASE"/>
    <property type="match status" value="1"/>
</dbReference>
<dbReference type="PANTHER" id="PTHR10949:SF0">
    <property type="entry name" value="LIPOYL SYNTHASE, MITOCHONDRIAL"/>
    <property type="match status" value="1"/>
</dbReference>
<dbReference type="Pfam" id="PF16881">
    <property type="entry name" value="LIAS_N"/>
    <property type="match status" value="1"/>
</dbReference>
<dbReference type="Pfam" id="PF04055">
    <property type="entry name" value="Radical_SAM"/>
    <property type="match status" value="1"/>
</dbReference>
<dbReference type="PIRSF" id="PIRSF005963">
    <property type="entry name" value="Lipoyl_synth"/>
    <property type="match status" value="1"/>
</dbReference>
<dbReference type="SFLD" id="SFLDF00271">
    <property type="entry name" value="lipoyl_synthase"/>
    <property type="match status" value="1"/>
</dbReference>
<dbReference type="SFLD" id="SFLDG01058">
    <property type="entry name" value="lipoyl_synthase_like"/>
    <property type="match status" value="1"/>
</dbReference>
<dbReference type="SMART" id="SM00729">
    <property type="entry name" value="Elp3"/>
    <property type="match status" value="1"/>
</dbReference>
<dbReference type="SUPFAM" id="SSF102114">
    <property type="entry name" value="Radical SAM enzymes"/>
    <property type="match status" value="1"/>
</dbReference>
<dbReference type="PROSITE" id="PS51918">
    <property type="entry name" value="RADICAL_SAM"/>
    <property type="match status" value="1"/>
</dbReference>
<accession>A0LTD9</accession>
<reference key="1">
    <citation type="journal article" date="2009" name="Genome Res.">
        <title>Complete genome of the cellulolytic thermophile Acidothermus cellulolyticus 11B provides insights into its ecophysiological and evolutionary adaptations.</title>
        <authorList>
            <person name="Barabote R.D."/>
            <person name="Xie G."/>
            <person name="Leu D.H."/>
            <person name="Normand P."/>
            <person name="Necsulea A."/>
            <person name="Daubin V."/>
            <person name="Medigue C."/>
            <person name="Adney W.S."/>
            <person name="Xu X.C."/>
            <person name="Lapidus A."/>
            <person name="Parales R.E."/>
            <person name="Detter C."/>
            <person name="Pujic P."/>
            <person name="Bruce D."/>
            <person name="Lavire C."/>
            <person name="Challacombe J.F."/>
            <person name="Brettin T.S."/>
            <person name="Berry A.M."/>
        </authorList>
    </citation>
    <scope>NUCLEOTIDE SEQUENCE [LARGE SCALE GENOMIC DNA]</scope>
    <source>
        <strain>ATCC 43068 / DSM 8971 / 11B</strain>
    </source>
</reference>
<name>LIPA_ACIC1</name>
<protein>
    <recommendedName>
        <fullName evidence="1">Lipoyl synthase</fullName>
        <ecNumber evidence="1">2.8.1.8</ecNumber>
    </recommendedName>
    <alternativeName>
        <fullName evidence="1">Lip-syn</fullName>
        <shortName evidence="1">LS</shortName>
    </alternativeName>
    <alternativeName>
        <fullName evidence="1">Lipoate synthase</fullName>
    </alternativeName>
    <alternativeName>
        <fullName evidence="1">Lipoic acid synthase</fullName>
    </alternativeName>
    <alternativeName>
        <fullName evidence="1">Sulfur insertion protein LipA</fullName>
    </alternativeName>
</protein>
<gene>
    <name evidence="1" type="primary">lipA</name>
    <name type="ordered locus">Acel_0926</name>
</gene>
<proteinExistence type="inferred from homology"/>
<evidence type="ECO:0000255" key="1">
    <source>
        <dbReference type="HAMAP-Rule" id="MF_00206"/>
    </source>
</evidence>
<evidence type="ECO:0000255" key="2">
    <source>
        <dbReference type="PROSITE-ProRule" id="PRU01266"/>
    </source>
</evidence>
<keyword id="KW-0004">4Fe-4S</keyword>
<keyword id="KW-0963">Cytoplasm</keyword>
<keyword id="KW-0408">Iron</keyword>
<keyword id="KW-0411">Iron-sulfur</keyword>
<keyword id="KW-0479">Metal-binding</keyword>
<keyword id="KW-1185">Reference proteome</keyword>
<keyword id="KW-0949">S-adenosyl-L-methionine</keyword>
<keyword id="KW-0808">Transferase</keyword>
<comment type="function">
    <text evidence="1">Catalyzes the radical-mediated insertion of two sulfur atoms into the C-6 and C-8 positions of the octanoyl moiety bound to the lipoyl domains of lipoate-dependent enzymes, thereby converting the octanoylated domains into lipoylated derivatives.</text>
</comment>
<comment type="catalytic activity">
    <reaction evidence="1">
        <text>[[Fe-S] cluster scaffold protein carrying a second [4Fe-4S](2+) cluster] + N(6)-octanoyl-L-lysyl-[protein] + 2 oxidized [2Fe-2S]-[ferredoxin] + 2 S-adenosyl-L-methionine + 4 H(+) = [[Fe-S] cluster scaffold protein] + N(6)-[(R)-dihydrolipoyl]-L-lysyl-[protein] + 4 Fe(3+) + 2 hydrogen sulfide + 2 5'-deoxyadenosine + 2 L-methionine + 2 reduced [2Fe-2S]-[ferredoxin]</text>
        <dbReference type="Rhea" id="RHEA:16585"/>
        <dbReference type="Rhea" id="RHEA-COMP:9928"/>
        <dbReference type="Rhea" id="RHEA-COMP:10000"/>
        <dbReference type="Rhea" id="RHEA-COMP:10001"/>
        <dbReference type="Rhea" id="RHEA-COMP:10475"/>
        <dbReference type="Rhea" id="RHEA-COMP:14568"/>
        <dbReference type="Rhea" id="RHEA-COMP:14569"/>
        <dbReference type="ChEBI" id="CHEBI:15378"/>
        <dbReference type="ChEBI" id="CHEBI:17319"/>
        <dbReference type="ChEBI" id="CHEBI:29034"/>
        <dbReference type="ChEBI" id="CHEBI:29919"/>
        <dbReference type="ChEBI" id="CHEBI:33722"/>
        <dbReference type="ChEBI" id="CHEBI:33737"/>
        <dbReference type="ChEBI" id="CHEBI:33738"/>
        <dbReference type="ChEBI" id="CHEBI:57844"/>
        <dbReference type="ChEBI" id="CHEBI:59789"/>
        <dbReference type="ChEBI" id="CHEBI:78809"/>
        <dbReference type="ChEBI" id="CHEBI:83100"/>
        <dbReference type="EC" id="2.8.1.8"/>
    </reaction>
</comment>
<comment type="cofactor">
    <cofactor evidence="1">
        <name>[4Fe-4S] cluster</name>
        <dbReference type="ChEBI" id="CHEBI:49883"/>
    </cofactor>
    <text evidence="1">Binds 2 [4Fe-4S] clusters per subunit. One cluster is coordinated with 3 cysteines and an exchangeable S-adenosyl-L-methionine.</text>
</comment>
<comment type="pathway">
    <text evidence="1">Protein modification; protein lipoylation via endogenous pathway; protein N(6)-(lipoyl)lysine from octanoyl-[acyl-carrier-protein]: step 2/2.</text>
</comment>
<comment type="subcellular location">
    <subcellularLocation>
        <location evidence="1">Cytoplasm</location>
    </subcellularLocation>
</comment>
<comment type="similarity">
    <text evidence="1">Belongs to the radical SAM superfamily. Lipoyl synthase family.</text>
</comment>
<feature type="chain" id="PRO_1000012178" description="Lipoyl synthase">
    <location>
        <begin position="1"/>
        <end position="323"/>
    </location>
</feature>
<feature type="domain" description="Radical SAM core" evidence="2">
    <location>
        <begin position="68"/>
        <end position="282"/>
    </location>
</feature>
<feature type="binding site" evidence="1">
    <location>
        <position position="56"/>
    </location>
    <ligand>
        <name>[4Fe-4S] cluster</name>
        <dbReference type="ChEBI" id="CHEBI:49883"/>
        <label>1</label>
    </ligand>
</feature>
<feature type="binding site" evidence="1">
    <location>
        <position position="61"/>
    </location>
    <ligand>
        <name>[4Fe-4S] cluster</name>
        <dbReference type="ChEBI" id="CHEBI:49883"/>
        <label>1</label>
    </ligand>
</feature>
<feature type="binding site" evidence="1">
    <location>
        <position position="67"/>
    </location>
    <ligand>
        <name>[4Fe-4S] cluster</name>
        <dbReference type="ChEBI" id="CHEBI:49883"/>
        <label>1</label>
    </ligand>
</feature>
<feature type="binding site" evidence="1">
    <location>
        <position position="82"/>
    </location>
    <ligand>
        <name>[4Fe-4S] cluster</name>
        <dbReference type="ChEBI" id="CHEBI:49883"/>
        <label>2</label>
        <note>4Fe-4S-S-AdoMet</note>
    </ligand>
</feature>
<feature type="binding site" evidence="1">
    <location>
        <position position="86"/>
    </location>
    <ligand>
        <name>[4Fe-4S] cluster</name>
        <dbReference type="ChEBI" id="CHEBI:49883"/>
        <label>2</label>
        <note>4Fe-4S-S-AdoMet</note>
    </ligand>
</feature>
<feature type="binding site" evidence="1">
    <location>
        <position position="89"/>
    </location>
    <ligand>
        <name>[4Fe-4S] cluster</name>
        <dbReference type="ChEBI" id="CHEBI:49883"/>
        <label>2</label>
        <note>4Fe-4S-S-AdoMet</note>
    </ligand>
</feature>
<feature type="binding site" evidence="1">
    <location>
        <position position="293"/>
    </location>
    <ligand>
        <name>[4Fe-4S] cluster</name>
        <dbReference type="ChEBI" id="CHEBI:49883"/>
        <label>1</label>
    </ligand>
</feature>
<organism>
    <name type="scientific">Acidothermus cellulolyticus (strain ATCC 43068 / DSM 8971 / 11B)</name>
    <dbReference type="NCBI Taxonomy" id="351607"/>
    <lineage>
        <taxon>Bacteria</taxon>
        <taxon>Bacillati</taxon>
        <taxon>Actinomycetota</taxon>
        <taxon>Actinomycetes</taxon>
        <taxon>Acidothermales</taxon>
        <taxon>Acidothermaceae</taxon>
        <taxon>Acidothermus</taxon>
    </lineage>
</organism>
<sequence length="323" mass="36163">MTAVTPDGRKLLRIEARNAQVPIERKPAWIRTRARMGPQYHALKELVRREGLHTVCEEAGCPNIFECWEDREATFLIGGDTCSRNCSFCQISSGRPQPLDRDEPRRVAESVARMGLRYATVTGVTRDDLDDEGAWLYAQTVREIHHAVPGCGVELLTPDFHGRPELLDEVFSARPEVFAHNIETVPRIFKSIRPGFRYERSLDVLRAAHDAGLVTKSNLILGLGETRQEIRAALADLRSAGCDLVTITQYLRPSIRHHPVVRWVEPAEFEELAAEARELGFAGVMSGPLVRSSYRAGRLYRAAIASRTDRRTDGATTQAPQTP</sequence>